<sequence>MSAGRLWSSLLLLLPLFCSKSSSCGLSTHVEIGHRALEFLRLQDGRINYKELILEHQDAYQAGTVFPDAFYPSICKRGKYHDVSERTHWTPFLNASIHYIRENYPLPWEKDTEKLVAFLFGITSHMVADLSWHNLGFLRTMGAIDFYNSYSDAHSAGDFGGDVLSQFEFNFNYLSRRWYVPVRDLLRIYDNLYGRKVITKDVLVDCTYLQFLEMHGEMFAVSKLYSTYSTKSPFLVEQFQDYFLGGLDDMAFWSTNIYRLTSFMLENGTSDCNLPENPLFISCDGRNHTLSGSKVQKNDFHRNLTMFISRDIRKNLNYTERGVFYSTGSWARPESVTFMYQTLERNLRLMLAGSSQKNLNHVSSPSASYTLSVPYARLGWVMTSADLNQDGHGDLVVGAPGYSHPGRFQIGRVYIIYGNDLGLPPIDLDLNKEGILEGFQPSGRFGSALAVLDFNQDGLPDLAVGAPSVGSGQLTYNGSVYVYYGSQQGRLSSSPNVTISCKDTYCNLGWTLLATDADGDGRHDLVISSPFAPGGRKQKGIVATFYSHPRRNDKELLTLEEADWKVNGEEDFSWFGYSLHGVTVANRSLLLIGSPTWKNVSRMARSSHKKNQEEKSLGKVYGYFLPNRQSTITISGDKAMGKLGTSLSSGYVRVNGTLTQVLLVGAPTHDDVSKMAFLTMTLHQGGATRMYELAPEKTQPALLSTFSGDRRFSRFGSVLHLTDLDDDGLDEIIMAAPLRITDVTSGLLGGEDGRVYIYNGMYTTLGDMTGKCKSWMTPCPEEKAQYVLTSPEASSRFGSSLVSVRSKGRNQVVVAAGRSSWGARLSGALHVYSFSSD</sequence>
<feature type="signal peptide" evidence="1">
    <location>
        <begin position="1"/>
        <end position="23"/>
    </location>
</feature>
<feature type="chain" id="PRO_0000022054" description="Phosphatidylinositol-glycan-specific phospholipase D">
    <location>
        <begin position="24"/>
        <end position="837"/>
    </location>
</feature>
<feature type="repeat" description="FG-GAP 1" evidence="3">
    <location>
        <begin position="364"/>
        <end position="425"/>
    </location>
</feature>
<feature type="repeat" description="FG-GAP 2" evidence="3">
    <location>
        <begin position="431"/>
        <end position="492"/>
    </location>
</feature>
<feature type="repeat" description="FG-GAP 3" evidence="3">
    <location>
        <begin position="494"/>
        <end position="554"/>
    </location>
</feature>
<feature type="repeat" description="FG-GAP 4" evidence="3">
    <location>
        <begin position="561"/>
        <end position="619"/>
    </location>
</feature>
<feature type="repeat" description="FG-GAP 5" evidence="3">
    <location>
        <begin position="629"/>
        <end position="689"/>
    </location>
</feature>
<feature type="repeat" description="FG-GAP 6" evidence="3">
    <location>
        <begin position="701"/>
        <end position="767"/>
    </location>
</feature>
<feature type="repeat" description="FG-GAP 7" evidence="3">
    <location>
        <begin position="785"/>
        <end position="837"/>
    </location>
</feature>
<feature type="glycosylation site" description="N-linked (GlcNAc...) asparagine" evidence="2">
    <location>
        <position position="94"/>
    </location>
</feature>
<feature type="glycosylation site" description="N-linked (GlcNAc...) asparagine" evidence="2">
    <location>
        <position position="267"/>
    </location>
</feature>
<feature type="glycosylation site" description="N-linked (GlcNAc...) asparagine" evidence="2">
    <location>
        <position position="287"/>
    </location>
</feature>
<feature type="glycosylation site" description="N-linked (GlcNAc...) asparagine" evidence="2">
    <location>
        <position position="303"/>
    </location>
</feature>
<feature type="glycosylation site" description="N-linked (GlcNAc...) asparagine" evidence="4">
    <location>
        <position position="317"/>
    </location>
</feature>
<feature type="glycosylation site" description="N-linked (GlcNAc...) asparagine" evidence="2">
    <location>
        <position position="477"/>
    </location>
</feature>
<feature type="glycosylation site" description="N-linked (GlcNAc...) asparagine" evidence="5">
    <location>
        <position position="496"/>
    </location>
</feature>
<feature type="glycosylation site" description="N-linked (GlcNAc...) asparagine" evidence="2">
    <location>
        <position position="586"/>
    </location>
</feature>
<feature type="glycosylation site" description="N-linked (GlcNAc...) asparagine" evidence="2">
    <location>
        <position position="599"/>
    </location>
</feature>
<feature type="glycosylation site" description="N-linked (GlcNAc...) asparagine" evidence="4">
    <location>
        <position position="655"/>
    </location>
</feature>
<dbReference type="EC" id="3.1.4.50"/>
<dbReference type="EMBL" id="AF050666">
    <property type="protein sequence ID" value="AAC77799.1"/>
    <property type="molecule type" value="mRNA"/>
</dbReference>
<dbReference type="FunCoup" id="O70362">
    <property type="interactions" value="38"/>
</dbReference>
<dbReference type="STRING" id="10090.ENSMUSP00000021773"/>
<dbReference type="GlyConnect" id="755">
    <property type="glycosylation" value="2 N-Linked glycans (4 sites)"/>
</dbReference>
<dbReference type="GlyCosmos" id="O70362">
    <property type="glycosylation" value="10 sites, 3 glycans"/>
</dbReference>
<dbReference type="GlyGen" id="O70362">
    <property type="glycosylation" value="10 sites, 6 N-linked glycans (5 sites)"/>
</dbReference>
<dbReference type="iPTMnet" id="O70362"/>
<dbReference type="PhosphoSitePlus" id="O70362"/>
<dbReference type="SwissPalm" id="O70362"/>
<dbReference type="CPTAC" id="non-CPTAC-3523"/>
<dbReference type="CPTAC" id="non-CPTAC-3665"/>
<dbReference type="jPOST" id="O70362"/>
<dbReference type="PaxDb" id="10090-ENSMUSP00000021773"/>
<dbReference type="PeptideAtlas" id="O70362"/>
<dbReference type="ProteomicsDB" id="301814"/>
<dbReference type="AGR" id="MGI:106604"/>
<dbReference type="MGI" id="MGI:106604">
    <property type="gene designation" value="Gpld1"/>
</dbReference>
<dbReference type="eggNOG" id="KOG3637">
    <property type="taxonomic scope" value="Eukaryota"/>
</dbReference>
<dbReference type="InParanoid" id="O70362"/>
<dbReference type="BRENDA" id="3.1.4.50">
    <property type="organism ID" value="3474"/>
</dbReference>
<dbReference type="Reactome" id="R-MMU-163125">
    <property type="pathway name" value="Post-translational modification: synthesis of GPI-anchored proteins"/>
</dbReference>
<dbReference type="ChiTaRS" id="Gpld1">
    <property type="organism name" value="mouse"/>
</dbReference>
<dbReference type="PRO" id="PR:O70362"/>
<dbReference type="Proteomes" id="UP000000589">
    <property type="component" value="Unplaced"/>
</dbReference>
<dbReference type="RNAct" id="O70362">
    <property type="molecule type" value="protein"/>
</dbReference>
<dbReference type="GO" id="GO:0005737">
    <property type="term" value="C:cytoplasm"/>
    <property type="evidence" value="ECO:0000314"/>
    <property type="project" value="UniProtKB"/>
</dbReference>
<dbReference type="GO" id="GO:0031012">
    <property type="term" value="C:extracellular matrix"/>
    <property type="evidence" value="ECO:0000314"/>
    <property type="project" value="UniProtKB"/>
</dbReference>
<dbReference type="GO" id="GO:0005576">
    <property type="term" value="C:extracellular region"/>
    <property type="evidence" value="ECO:0000314"/>
    <property type="project" value="UniProtKB"/>
</dbReference>
<dbReference type="GO" id="GO:0005615">
    <property type="term" value="C:extracellular space"/>
    <property type="evidence" value="ECO:0000314"/>
    <property type="project" value="UniProtKB"/>
</dbReference>
<dbReference type="GO" id="GO:0034364">
    <property type="term" value="C:high-density lipoprotein particle"/>
    <property type="evidence" value="ECO:0007669"/>
    <property type="project" value="UniProtKB-KW"/>
</dbReference>
<dbReference type="GO" id="GO:0043231">
    <property type="term" value="C:intracellular membrane-bounded organelle"/>
    <property type="evidence" value="ECO:0000314"/>
    <property type="project" value="UniProtKB"/>
</dbReference>
<dbReference type="GO" id="GO:0004621">
    <property type="term" value="F:glycosylphosphatidylinositol phospholipase D activity"/>
    <property type="evidence" value="ECO:0000314"/>
    <property type="project" value="UniProtKB"/>
</dbReference>
<dbReference type="GO" id="GO:0017080">
    <property type="term" value="F:sodium channel regulator activity"/>
    <property type="evidence" value="ECO:0000315"/>
    <property type="project" value="UniProtKB"/>
</dbReference>
<dbReference type="GO" id="GO:0002042">
    <property type="term" value="P:cell migration involved in sprouting angiogenesis"/>
    <property type="evidence" value="ECO:0000250"/>
    <property type="project" value="UniProtKB"/>
</dbReference>
<dbReference type="GO" id="GO:0071397">
    <property type="term" value="P:cellular response to cholesterol"/>
    <property type="evidence" value="ECO:0000250"/>
    <property type="project" value="UniProtKB"/>
</dbReference>
<dbReference type="GO" id="GO:0032869">
    <property type="term" value="P:cellular response to insulin stimulus"/>
    <property type="evidence" value="ECO:0000250"/>
    <property type="project" value="UniProtKB"/>
</dbReference>
<dbReference type="GO" id="GO:0071467">
    <property type="term" value="P:cellular response to pH"/>
    <property type="evidence" value="ECO:0000250"/>
    <property type="project" value="UniProtKB"/>
</dbReference>
<dbReference type="GO" id="GO:0071401">
    <property type="term" value="P:cellular response to triglyceride"/>
    <property type="evidence" value="ECO:0000250"/>
    <property type="project" value="UniProtKB"/>
</dbReference>
<dbReference type="GO" id="GO:0071466">
    <property type="term" value="P:cellular response to xenobiotic stimulus"/>
    <property type="evidence" value="ECO:0000250"/>
    <property type="project" value="UniProtKB"/>
</dbReference>
<dbReference type="GO" id="GO:0002062">
    <property type="term" value="P:chondrocyte differentiation"/>
    <property type="evidence" value="ECO:0000270"/>
    <property type="project" value="UniProtKB"/>
</dbReference>
<dbReference type="GO" id="GO:0002430">
    <property type="term" value="P:complement receptor mediated signaling pathway"/>
    <property type="evidence" value="ECO:0000250"/>
    <property type="project" value="UniProtKB"/>
</dbReference>
<dbReference type="GO" id="GO:0008286">
    <property type="term" value="P:insulin receptor signaling pathway"/>
    <property type="evidence" value="ECO:0000250"/>
    <property type="project" value="UniProtKB"/>
</dbReference>
<dbReference type="GO" id="GO:0008285">
    <property type="term" value="P:negative regulation of cell population proliferation"/>
    <property type="evidence" value="ECO:0000250"/>
    <property type="project" value="UniProtKB"/>
</dbReference>
<dbReference type="GO" id="GO:0010897">
    <property type="term" value="P:negative regulation of triglyceride catabolic process"/>
    <property type="evidence" value="ECO:0000314"/>
    <property type="project" value="UniProtKB"/>
</dbReference>
<dbReference type="GO" id="GO:0001503">
    <property type="term" value="P:ossification"/>
    <property type="evidence" value="ECO:0000270"/>
    <property type="project" value="UniProtKB"/>
</dbReference>
<dbReference type="GO" id="GO:0046470">
    <property type="term" value="P:phosphatidylcholine metabolic process"/>
    <property type="evidence" value="ECO:0000250"/>
    <property type="project" value="UniProtKB"/>
</dbReference>
<dbReference type="GO" id="GO:0010694">
    <property type="term" value="P:positive regulation of alkaline phosphatase activity"/>
    <property type="evidence" value="ECO:0000250"/>
    <property type="project" value="UniProtKB"/>
</dbReference>
<dbReference type="GO" id="GO:0043065">
    <property type="term" value="P:positive regulation of apoptotic process"/>
    <property type="evidence" value="ECO:0000250"/>
    <property type="project" value="UniProtKB"/>
</dbReference>
<dbReference type="GO" id="GO:0010595">
    <property type="term" value="P:positive regulation of endothelial cell migration"/>
    <property type="evidence" value="ECO:0000250"/>
    <property type="project" value="UniProtKB"/>
</dbReference>
<dbReference type="GO" id="GO:0010907">
    <property type="term" value="P:positive regulation of glucose metabolic process"/>
    <property type="evidence" value="ECO:0000314"/>
    <property type="project" value="UniProtKB"/>
</dbReference>
<dbReference type="GO" id="GO:0010983">
    <property type="term" value="P:positive regulation of high-density lipoprotein particle clearance"/>
    <property type="evidence" value="ECO:0000315"/>
    <property type="project" value="UniProtKB"/>
</dbReference>
<dbReference type="GO" id="GO:0035774">
    <property type="term" value="P:positive regulation of insulin secretion involved in cellular response to glucose stimulus"/>
    <property type="evidence" value="ECO:0000314"/>
    <property type="project" value="UniProtKB"/>
</dbReference>
<dbReference type="GO" id="GO:0051044">
    <property type="term" value="P:positive regulation of membrane protein ectodomain proteolysis"/>
    <property type="evidence" value="ECO:0000314"/>
    <property type="project" value="UniProtKB"/>
</dbReference>
<dbReference type="GO" id="GO:0010867">
    <property type="term" value="P:positive regulation of triglyceride biosynthetic process"/>
    <property type="evidence" value="ECO:0000314"/>
    <property type="project" value="UniProtKB"/>
</dbReference>
<dbReference type="GO" id="GO:0009306">
    <property type="term" value="P:protein secretion"/>
    <property type="evidence" value="ECO:0000315"/>
    <property type="project" value="UniProtKB"/>
</dbReference>
<dbReference type="GO" id="GO:1900076">
    <property type="term" value="P:regulation of cellular response to insulin stimulus"/>
    <property type="evidence" value="ECO:0000250"/>
    <property type="project" value="UniProtKB"/>
</dbReference>
<dbReference type="GO" id="GO:0009749">
    <property type="term" value="P:response to glucose"/>
    <property type="evidence" value="ECO:0000250"/>
    <property type="project" value="UniProtKB"/>
</dbReference>
<dbReference type="GO" id="GO:0070633">
    <property type="term" value="P:transepithelial transport"/>
    <property type="evidence" value="ECO:0000315"/>
    <property type="project" value="UniProtKB"/>
</dbReference>
<dbReference type="FunFam" id="2.130.10.130:FF:000010">
    <property type="entry name" value="Glycosylphosphatidylinositol specific phospholipase D1"/>
    <property type="match status" value="1"/>
</dbReference>
<dbReference type="FunFam" id="2.130.10.130:FF:000011">
    <property type="entry name" value="Glycosylphosphatidylinositol specific phospholipase D1"/>
    <property type="match status" value="1"/>
</dbReference>
<dbReference type="Gene3D" id="2.130.10.130">
    <property type="entry name" value="Integrin alpha, N-terminal"/>
    <property type="match status" value="3"/>
</dbReference>
<dbReference type="InterPro" id="IPR013517">
    <property type="entry name" value="FG-GAP"/>
</dbReference>
<dbReference type="InterPro" id="IPR001028">
    <property type="entry name" value="Gprt_PLipase_D"/>
</dbReference>
<dbReference type="InterPro" id="IPR013519">
    <property type="entry name" value="Int_alpha_beta-p"/>
</dbReference>
<dbReference type="InterPro" id="IPR028994">
    <property type="entry name" value="Integrin_alpha_N"/>
</dbReference>
<dbReference type="InterPro" id="IPR029002">
    <property type="entry name" value="PLPC/GPLD1"/>
</dbReference>
<dbReference type="PANTHER" id="PTHR23221">
    <property type="entry name" value="GLYCOSYLPHOSPHATIDYLINOSITOL PHOSPHOLIPASE D"/>
    <property type="match status" value="1"/>
</dbReference>
<dbReference type="PANTHER" id="PTHR23221:SF7">
    <property type="entry name" value="PHOSPHATIDYLINOSITOL-GLYCAN-SPECIFIC PHOSPHOLIPASE D"/>
    <property type="match status" value="1"/>
</dbReference>
<dbReference type="Pfam" id="PF01839">
    <property type="entry name" value="FG-GAP"/>
    <property type="match status" value="4"/>
</dbReference>
<dbReference type="Pfam" id="PF00882">
    <property type="entry name" value="Zn_dep_PLPC"/>
    <property type="match status" value="1"/>
</dbReference>
<dbReference type="PRINTS" id="PR00718">
    <property type="entry name" value="PHPHLIPASED"/>
</dbReference>
<dbReference type="SMART" id="SM00191">
    <property type="entry name" value="Int_alpha"/>
    <property type="match status" value="5"/>
</dbReference>
<dbReference type="SUPFAM" id="SSF69318">
    <property type="entry name" value="Integrin alpha N-terminal domain"/>
    <property type="match status" value="1"/>
</dbReference>
<dbReference type="PROSITE" id="PS51470">
    <property type="entry name" value="FG_GAP"/>
    <property type="match status" value="7"/>
</dbReference>
<gene>
    <name type="primary">Gpld1</name>
</gene>
<proteinExistence type="evidence at protein level"/>
<name>PHLD_MOUSE</name>
<accession>O70362</accession>
<organism>
    <name type="scientific">Mus musculus</name>
    <name type="common">Mouse</name>
    <dbReference type="NCBI Taxonomy" id="10090"/>
    <lineage>
        <taxon>Eukaryota</taxon>
        <taxon>Metazoa</taxon>
        <taxon>Chordata</taxon>
        <taxon>Craniata</taxon>
        <taxon>Vertebrata</taxon>
        <taxon>Euteleostomi</taxon>
        <taxon>Mammalia</taxon>
        <taxon>Eutheria</taxon>
        <taxon>Euarchontoglires</taxon>
        <taxon>Glires</taxon>
        <taxon>Rodentia</taxon>
        <taxon>Myomorpha</taxon>
        <taxon>Muroidea</taxon>
        <taxon>Muridae</taxon>
        <taxon>Murinae</taxon>
        <taxon>Mus</taxon>
        <taxon>Mus</taxon>
    </lineage>
</organism>
<reference key="1">
    <citation type="journal article" date="1998" name="Mamm. Genome">
        <title>Mouse glycosylphosphatidylinositol-specific phospholipase D (Gpld1) characterization.</title>
        <authorList>
            <person name="LeBoeuf R.C."/>
            <person name="Caldwell M."/>
            <person name="Guo Y."/>
            <person name="Metz C."/>
            <person name="Davitz M.A."/>
            <person name="Olson L.K."/>
            <person name="Deeg M.A."/>
        </authorList>
    </citation>
    <scope>NUCLEOTIDE SEQUENCE [MRNA]</scope>
    <scope>SUBUNIT</scope>
    <scope>FUNCTION</scope>
    <scope>TISSUE SPECIFICITY</scope>
    <source>
        <tissue>Glucagonoma</tissue>
    </source>
</reference>
<reference key="2">
    <citation type="journal article" date="2006" name="J. Proteome Res.">
        <title>Proteome-wide characterization of N-glycosylation events by diagonal chromatography.</title>
        <authorList>
            <person name="Ghesquiere B."/>
            <person name="Van Damme J."/>
            <person name="Martens L."/>
            <person name="Vandekerckhove J."/>
            <person name="Gevaert K."/>
        </authorList>
    </citation>
    <scope>GLYCOSYLATION [LARGE SCALE ANALYSIS] AT ASN-317 AND ASN-655</scope>
    <source>
        <strain>C57BL/6J</strain>
        <tissue>Plasma</tissue>
    </source>
</reference>
<reference key="3">
    <citation type="journal article" date="2007" name="J. Proteome Res.">
        <title>Enhanced analysis of the mouse plasma proteome using cysteine-containing tryptic glycopeptides.</title>
        <authorList>
            <person name="Bernhard O.K."/>
            <person name="Kapp E.A."/>
            <person name="Simpson R.J."/>
        </authorList>
    </citation>
    <scope>GLYCOSYLATION [LARGE SCALE ANALYSIS] AT ASN-496</scope>
    <source>
        <strain>C57BL/6J</strain>
        <tissue>Plasma</tissue>
    </source>
</reference>
<reference key="4">
    <citation type="journal article" date="2010" name="Cell">
        <title>A tissue-specific atlas of mouse protein phosphorylation and expression.</title>
        <authorList>
            <person name="Huttlin E.L."/>
            <person name="Jedrychowski M.P."/>
            <person name="Elias J.E."/>
            <person name="Goswami T."/>
            <person name="Rad R."/>
            <person name="Beausoleil S.A."/>
            <person name="Villen J."/>
            <person name="Haas W."/>
            <person name="Sowa M.E."/>
            <person name="Gygi S.P."/>
        </authorList>
    </citation>
    <scope>IDENTIFICATION BY MASS SPECTROMETRY [LARGE SCALE ANALYSIS]</scope>
    <source>
        <tissue>Brain</tissue>
        <tissue>Brown adipose tissue</tissue>
        <tissue>Heart</tissue>
        <tissue>Kidney</tissue>
        <tissue>Liver</tissue>
        <tissue>Lung</tissue>
        <tissue>Spleen</tissue>
        <tissue>Testis</tissue>
    </source>
</reference>
<evidence type="ECO:0000250" key="1"/>
<evidence type="ECO:0000255" key="2"/>
<evidence type="ECO:0000255" key="3">
    <source>
        <dbReference type="PROSITE-ProRule" id="PRU00803"/>
    </source>
</evidence>
<evidence type="ECO:0000269" key="4">
    <source>
    </source>
</evidence>
<evidence type="ECO:0000269" key="5">
    <source>
    </source>
</evidence>
<evidence type="ECO:0000269" key="6">
    <source>
    </source>
</evidence>
<evidence type="ECO:0000305" key="7"/>
<comment type="function">
    <text evidence="6">This protein hydrolyzes the inositol phosphate linkage in proteins anchored by phosphatidylinositol glycans (GPI-anchor) thus releasing these proteins from the membrane.</text>
</comment>
<comment type="catalytic activity">
    <reaction>
        <text>a 6-(alpha-D-glucosaminyl)-1-(1,2-diacyl-sn-glycero-3-phospho)-1D-myo-inositol + H2O = 6-(alpha-D-glucosaminyl)-1D-myo-inositol + a 1,2-diacyl-sn-glycero-3-phosphate + H(+)</text>
        <dbReference type="Rhea" id="RHEA:10832"/>
        <dbReference type="ChEBI" id="CHEBI:15377"/>
        <dbReference type="ChEBI" id="CHEBI:15378"/>
        <dbReference type="ChEBI" id="CHEBI:57997"/>
        <dbReference type="ChEBI" id="CHEBI:58608"/>
        <dbReference type="ChEBI" id="CHEBI:58700"/>
        <dbReference type="EC" id="3.1.4.50"/>
    </reaction>
</comment>
<comment type="subunit">
    <text evidence="7">Monomer.</text>
</comment>
<comment type="subcellular location">
    <subcellularLocation>
        <location>Secreted</location>
    </subcellularLocation>
    <text evidence="1">Associated with the High-Density Lipoproteins (HDL).</text>
</comment>
<comment type="tissue specificity">
    <text evidence="6">Widely expressed.</text>
</comment>
<comment type="similarity">
    <text evidence="7">Belongs to the GPLD1 family.</text>
</comment>
<keyword id="KW-0325">Glycoprotein</keyword>
<keyword id="KW-0345">HDL</keyword>
<keyword id="KW-0378">Hydrolase</keyword>
<keyword id="KW-0443">Lipid metabolism</keyword>
<keyword id="KW-1185">Reference proteome</keyword>
<keyword id="KW-0677">Repeat</keyword>
<keyword id="KW-0964">Secreted</keyword>
<keyword id="KW-0732">Signal</keyword>
<protein>
    <recommendedName>
        <fullName>Phosphatidylinositol-glycan-specific phospholipase D</fullName>
        <shortName>PI-G PLD</shortName>
        <ecNumber>3.1.4.50</ecNumber>
    </recommendedName>
    <alternativeName>
        <fullName>Glycoprotein phospholipase D</fullName>
    </alternativeName>
    <alternativeName>
        <fullName>Glycosyl-phosphatidylinositol-specific phospholipase D</fullName>
        <shortName>GPI-PLD</shortName>
        <shortName>GPI-specific phospholipase D</shortName>
    </alternativeName>
</protein>